<feature type="chain" id="PRO_0000230866" description="Transcriptional repressor NrdR">
    <location>
        <begin position="1"/>
        <end position="175"/>
    </location>
</feature>
<feature type="domain" description="ATP-cone" evidence="1">
    <location>
        <begin position="47"/>
        <end position="137"/>
    </location>
</feature>
<feature type="zinc finger region" evidence="1">
    <location>
        <begin position="3"/>
        <end position="32"/>
    </location>
</feature>
<organism>
    <name type="scientific">Dehalococcoides mccartyi (strain CBDB1)</name>
    <dbReference type="NCBI Taxonomy" id="255470"/>
    <lineage>
        <taxon>Bacteria</taxon>
        <taxon>Bacillati</taxon>
        <taxon>Chloroflexota</taxon>
        <taxon>Dehalococcoidia</taxon>
        <taxon>Dehalococcoidales</taxon>
        <taxon>Dehalococcoidaceae</taxon>
        <taxon>Dehalococcoides</taxon>
    </lineage>
</organism>
<evidence type="ECO:0000255" key="1">
    <source>
        <dbReference type="HAMAP-Rule" id="MF_00440"/>
    </source>
</evidence>
<protein>
    <recommendedName>
        <fullName evidence="1">Transcriptional repressor NrdR</fullName>
    </recommendedName>
</protein>
<accession>Q3ZZA1</accession>
<dbReference type="EMBL" id="AJ965256">
    <property type="protein sequence ID" value="CAI82517.1"/>
    <property type="molecule type" value="Genomic_DNA"/>
</dbReference>
<dbReference type="RefSeq" id="WP_011308875.1">
    <property type="nucleotide sequence ID" value="NC_007356.1"/>
</dbReference>
<dbReference type="SMR" id="Q3ZZA1"/>
<dbReference type="KEGG" id="deh:cbdbA286"/>
<dbReference type="HOGENOM" id="CLU_108412_0_0_0"/>
<dbReference type="Proteomes" id="UP000000433">
    <property type="component" value="Chromosome"/>
</dbReference>
<dbReference type="GO" id="GO:0005524">
    <property type="term" value="F:ATP binding"/>
    <property type="evidence" value="ECO:0007669"/>
    <property type="project" value="UniProtKB-KW"/>
</dbReference>
<dbReference type="GO" id="GO:0003677">
    <property type="term" value="F:DNA binding"/>
    <property type="evidence" value="ECO:0007669"/>
    <property type="project" value="UniProtKB-KW"/>
</dbReference>
<dbReference type="GO" id="GO:0008270">
    <property type="term" value="F:zinc ion binding"/>
    <property type="evidence" value="ECO:0007669"/>
    <property type="project" value="UniProtKB-KW"/>
</dbReference>
<dbReference type="GO" id="GO:0045892">
    <property type="term" value="P:negative regulation of DNA-templated transcription"/>
    <property type="evidence" value="ECO:0007669"/>
    <property type="project" value="UniProtKB-UniRule"/>
</dbReference>
<dbReference type="HAMAP" id="MF_00440">
    <property type="entry name" value="NrdR"/>
    <property type="match status" value="1"/>
</dbReference>
<dbReference type="InterPro" id="IPR005144">
    <property type="entry name" value="ATP-cone_dom"/>
</dbReference>
<dbReference type="InterPro" id="IPR055173">
    <property type="entry name" value="NrdR-like_N"/>
</dbReference>
<dbReference type="InterPro" id="IPR003796">
    <property type="entry name" value="RNR_NrdR-like"/>
</dbReference>
<dbReference type="NCBIfam" id="TIGR00244">
    <property type="entry name" value="transcriptional regulator NrdR"/>
    <property type="match status" value="1"/>
</dbReference>
<dbReference type="PANTHER" id="PTHR30455">
    <property type="entry name" value="TRANSCRIPTIONAL REPRESSOR NRDR"/>
    <property type="match status" value="1"/>
</dbReference>
<dbReference type="PANTHER" id="PTHR30455:SF2">
    <property type="entry name" value="TRANSCRIPTIONAL REPRESSOR NRDR"/>
    <property type="match status" value="1"/>
</dbReference>
<dbReference type="Pfam" id="PF03477">
    <property type="entry name" value="ATP-cone"/>
    <property type="match status" value="1"/>
</dbReference>
<dbReference type="Pfam" id="PF22811">
    <property type="entry name" value="Zn_ribbon_NrdR"/>
    <property type="match status" value="1"/>
</dbReference>
<dbReference type="PROSITE" id="PS51161">
    <property type="entry name" value="ATP_CONE"/>
    <property type="match status" value="1"/>
</dbReference>
<proteinExistence type="inferred from homology"/>
<gene>
    <name evidence="1" type="primary">nrdR</name>
    <name type="ordered locus">cbdbA286</name>
</gene>
<comment type="function">
    <text evidence="1">Negatively regulates transcription of bacterial ribonucleotide reductase nrd genes and operons by binding to NrdR-boxes.</text>
</comment>
<comment type="cofactor">
    <cofactor evidence="1">
        <name>Zn(2+)</name>
        <dbReference type="ChEBI" id="CHEBI:29105"/>
    </cofactor>
    <text evidence="1">Binds 1 zinc ion.</text>
</comment>
<comment type="similarity">
    <text evidence="1">Belongs to the NrdR family.</text>
</comment>
<name>NRDR_DEHMC</name>
<reference key="1">
    <citation type="journal article" date="2005" name="Nat. Biotechnol.">
        <title>Genome sequence of the chlorinated compound-respiring bacterium Dehalococcoides species strain CBDB1.</title>
        <authorList>
            <person name="Kube M."/>
            <person name="Beck A."/>
            <person name="Zinder S.H."/>
            <person name="Kuhl H."/>
            <person name="Reinhardt R."/>
            <person name="Adrian L."/>
        </authorList>
    </citation>
    <scope>NUCLEOTIDE SEQUENCE [LARGE SCALE GENOMIC DNA]</scope>
    <source>
        <strain>CBDB1</strain>
    </source>
</reference>
<sequence length="175" mass="20123">MNCPYCSHPDSKVIDSRDVDDGVRRRRECVVCGQRFTTYERFQPAGLFVVKKDQRREEFNKEKLLSGLRRACEKRPLPAGAVDKVAGDIEAELYNMGKAEIPSTLLGDMVMERLKMLDNIAYVRFASVYREFTDITQLKKVVDNLVNGQDEGIYKGQLSLLPEDKAVPKTRYQRR</sequence>
<keyword id="KW-0067">ATP-binding</keyword>
<keyword id="KW-0238">DNA-binding</keyword>
<keyword id="KW-0479">Metal-binding</keyword>
<keyword id="KW-0547">Nucleotide-binding</keyword>
<keyword id="KW-0678">Repressor</keyword>
<keyword id="KW-0804">Transcription</keyword>
<keyword id="KW-0805">Transcription regulation</keyword>
<keyword id="KW-0862">Zinc</keyword>
<keyword id="KW-0863">Zinc-finger</keyword>